<name>HAND1_HUMAN</name>
<protein>
    <recommendedName>
        <fullName>Heart- and neural crest derivatives-expressed protein 1</fullName>
    </recommendedName>
    <alternativeName>
        <fullName>Class A basic helix-loop-helix protein 27</fullName>
        <shortName>bHLHa27</shortName>
    </alternativeName>
    <alternativeName>
        <fullName>Extraembryonic tissues, heart, autonomic nervous system and neural crest derivatives-expressed protein 1</fullName>
        <shortName>eHAND</shortName>
    </alternativeName>
</protein>
<accession>O96004</accession>
<comment type="function">
    <text evidence="2 5">Transcription factor that plays an essential role in both trophoblast giant cell differentiation and in cardiac morphogenesis (By similarity). Binds the DNA sequence 5'-NRTCTG-3' (non-canonical E-box) (By similarity). Acts as a transcriptional repressor of SOX15 (By similarity). In the adult, could be required for ongoing expression of cardiac-specific genes (PubMed:9931445).</text>
</comment>
<comment type="subunit">
    <text evidence="1 2">Efficient DNA binding requires dimerization with another bHLH protein. Forms homodimers and heterodimers with TCF3 gene products E12 and E47, HAND2 and HEY1, HEY2 and HEYL (hairy-related transcription factors). Interacts with MDFIC (By similarity). Interacts with SOX15; the interaction enhances HAND1-induced differentiation of trophoblast giant cells (By similarity).</text>
</comment>
<comment type="interaction">
    <interactant intactId="EBI-11320290">
        <id>O96004</id>
    </interactant>
    <interactant intactId="EBI-10976677">
        <id>G5E9A7</id>
        <label>DMWD</label>
    </interactant>
    <organismsDiffer>false</organismsDiffer>
    <experiments>3</experiments>
</comment>
<comment type="interaction">
    <interactant intactId="EBI-11320290">
        <id>O96004</id>
    </interactant>
    <interactant intactId="EBI-12012928">
        <id>P60371</id>
        <label>KRTAP10-6</label>
    </interactant>
    <organismsDiffer>false</organismsDiffer>
    <experiments>3</experiments>
</comment>
<comment type="interaction">
    <interactant intactId="EBI-11320290">
        <id>O96004</id>
    </interactant>
    <interactant intactId="EBI-50433196">
        <id>A0A6Q8PF08</id>
        <label>PMP22</label>
    </interactant>
    <organismsDiffer>false</organismsDiffer>
    <experiments>3</experiments>
</comment>
<comment type="interaction">
    <interactant intactId="EBI-11320290">
        <id>O96004</id>
    </interactant>
    <interactant intactId="EBI-5235340">
        <id>Q7Z699</id>
        <label>SPRED1</label>
    </interactant>
    <organismsDiffer>false</organismsDiffer>
    <experiments>3</experiments>
</comment>
<comment type="interaction">
    <interactant intactId="EBI-11320290">
        <id>O96004</id>
    </interactant>
    <interactant intactId="EBI-11952764">
        <id>Q99081-3</id>
        <label>TCF12</label>
    </interactant>
    <organismsDiffer>false</organismsDiffer>
    <experiments>3</experiments>
</comment>
<comment type="interaction">
    <interactant intactId="EBI-11320290">
        <id>O96004</id>
    </interactant>
    <interactant intactId="EBI-12000326">
        <id>P15923-3</id>
        <label>TCF3</label>
    </interactant>
    <organismsDiffer>false</organismsDiffer>
    <experiments>3</experiments>
</comment>
<comment type="interaction">
    <interactant intactId="EBI-11320290">
        <id>O96004</id>
    </interactant>
    <interactant intactId="EBI-12806590">
        <id>Q86WV8</id>
        <label>TSC1</label>
    </interactant>
    <organismsDiffer>false</organismsDiffer>
    <experiments>3</experiments>
</comment>
<comment type="subcellular location">
    <subcellularLocation>
        <location evidence="1">Nucleus</location>
        <location evidence="1">Nucleoplasm</location>
    </subcellularLocation>
    <subcellularLocation>
        <location evidence="1">Nucleus</location>
        <location evidence="1">Nucleolus</location>
    </subcellularLocation>
    <text evidence="1">Interaction with MDFIC sequesters it into the nucleolus, preventing the transcription factor activity. Phosphorylation by PLK4 disrupts the interaction with MDFIC and releases it from the nucleolus, leading to transcription factor activity (By similarity).</text>
</comment>
<comment type="tissue specificity">
    <text>Heart.</text>
</comment>
<comment type="PTM">
    <text evidence="1">Phosphorylation by PLK4 disrupts the interaction with MDFIC and leads to translocation into the nucleoplasm, allowing dimerization and transcription factor activity.</text>
</comment>
<reference key="1">
    <citation type="journal article" date="1998" name="Gene">
        <title>Molecular cloning of the human Hand1 gene/cDNA and its tissue-restricted expression in cytotrophoblastic cells and heart.</title>
        <authorList>
            <person name="Knoefler M."/>
            <person name="Meinhardt G."/>
            <person name="Vasicek R."/>
            <person name="Husslein P."/>
            <person name="Egarter C."/>
        </authorList>
    </citation>
    <scope>NUCLEOTIDE SEQUENCE [GENOMIC DNA / MRNA]</scope>
    <scope>FUNCTION</scope>
    <source>
        <tissue>Heart</tissue>
    </source>
</reference>
<reference key="2">
    <citation type="journal article" date="2004" name="Genome Res.">
        <title>The status, quality, and expansion of the NIH full-length cDNA project: the Mammalian Gene Collection (MGC).</title>
        <authorList>
            <consortium name="The MGC Project Team"/>
        </authorList>
    </citation>
    <scope>NUCLEOTIDE SEQUENCE [LARGE SCALE MRNA]</scope>
    <source>
        <tissue>Brain</tissue>
    </source>
</reference>
<sequence>MNLVGSYAHHHHHHHPHPAHPMLHEPFLFGPASRCHQERPYFQSWLLSPADAAPDFPAGGPPPAAAAAATAYGPDARPGQSPGRLEALGGRLGRRKGSGPKKERRRTESINSAFAELRECIPNVPADTKLSKIKTLRLATSYIAYLMDVLAKDAQSGDPEAFKAELKKADGGRESKRKRELQQHEGFPPALGPVEKRIKGRTGWPQQVWALELNQ</sequence>
<dbReference type="EMBL" id="AF063012">
    <property type="protein sequence ID" value="AAD19283.1"/>
    <property type="molecule type" value="Genomic_DNA"/>
</dbReference>
<dbReference type="EMBL" id="AF061756">
    <property type="protein sequence ID" value="AAD19280.1"/>
    <property type="molecule type" value="mRNA"/>
</dbReference>
<dbReference type="EMBL" id="BC021190">
    <property type="protein sequence ID" value="AAH21190.1"/>
    <property type="molecule type" value="mRNA"/>
</dbReference>
<dbReference type="CCDS" id="CCDS4327.1"/>
<dbReference type="RefSeq" id="NP_004812.1">
    <property type="nucleotide sequence ID" value="NM_004821.3"/>
</dbReference>
<dbReference type="SMR" id="O96004"/>
<dbReference type="BioGRID" id="114814">
    <property type="interactions" value="16"/>
</dbReference>
<dbReference type="FunCoup" id="O96004">
    <property type="interactions" value="783"/>
</dbReference>
<dbReference type="IntAct" id="O96004">
    <property type="interactions" value="8"/>
</dbReference>
<dbReference type="MINT" id="O96004"/>
<dbReference type="STRING" id="9606.ENSP00000231121"/>
<dbReference type="iPTMnet" id="O96004"/>
<dbReference type="PhosphoSitePlus" id="O96004"/>
<dbReference type="BioMuta" id="HAND1"/>
<dbReference type="MassIVE" id="O96004"/>
<dbReference type="PaxDb" id="9606-ENSP00000231121"/>
<dbReference type="PeptideAtlas" id="O96004"/>
<dbReference type="ProteomicsDB" id="51183"/>
<dbReference type="Antibodypedia" id="16446">
    <property type="antibodies" value="378 antibodies from 35 providers"/>
</dbReference>
<dbReference type="DNASU" id="9421"/>
<dbReference type="Ensembl" id="ENST00000231121.3">
    <property type="protein sequence ID" value="ENSP00000231121.2"/>
    <property type="gene ID" value="ENSG00000113196.3"/>
</dbReference>
<dbReference type="GeneID" id="9421"/>
<dbReference type="KEGG" id="hsa:9421"/>
<dbReference type="MANE-Select" id="ENST00000231121.3">
    <property type="protein sequence ID" value="ENSP00000231121.2"/>
    <property type="RefSeq nucleotide sequence ID" value="NM_004821.3"/>
    <property type="RefSeq protein sequence ID" value="NP_004812.1"/>
</dbReference>
<dbReference type="UCSC" id="uc003lvn.3">
    <property type="organism name" value="human"/>
</dbReference>
<dbReference type="AGR" id="HGNC:4807"/>
<dbReference type="CTD" id="9421"/>
<dbReference type="DisGeNET" id="9421"/>
<dbReference type="GeneCards" id="HAND1"/>
<dbReference type="HGNC" id="HGNC:4807">
    <property type="gene designation" value="HAND1"/>
</dbReference>
<dbReference type="HPA" id="ENSG00000113196">
    <property type="expression patterns" value="Tissue enhanced (heart muscle, intestine)"/>
</dbReference>
<dbReference type="MalaCards" id="HAND1"/>
<dbReference type="MIM" id="602406">
    <property type="type" value="gene"/>
</dbReference>
<dbReference type="neXtProt" id="NX_O96004"/>
<dbReference type="OpenTargets" id="ENSG00000113196"/>
<dbReference type="PharmGKB" id="PA29183"/>
<dbReference type="VEuPathDB" id="HostDB:ENSG00000113196"/>
<dbReference type="eggNOG" id="KOG4029">
    <property type="taxonomic scope" value="Eukaryota"/>
</dbReference>
<dbReference type="GeneTree" id="ENSGT00940000161111"/>
<dbReference type="HOGENOM" id="CLU_119591_0_0_1"/>
<dbReference type="InParanoid" id="O96004"/>
<dbReference type="OMA" id="SRCHQDR"/>
<dbReference type="OrthoDB" id="10055449at2759"/>
<dbReference type="PAN-GO" id="O96004">
    <property type="GO annotations" value="4 GO annotations based on evolutionary models"/>
</dbReference>
<dbReference type="PhylomeDB" id="O96004"/>
<dbReference type="TreeFam" id="TF315153"/>
<dbReference type="PathwayCommons" id="O96004"/>
<dbReference type="Reactome" id="R-HSA-9733709">
    <property type="pathway name" value="Cardiogenesis"/>
</dbReference>
<dbReference type="SignaLink" id="O96004"/>
<dbReference type="SIGNOR" id="O96004"/>
<dbReference type="BioGRID-ORCS" id="9421">
    <property type="hits" value="14 hits in 1172 CRISPR screens"/>
</dbReference>
<dbReference type="GeneWiki" id="HAND1"/>
<dbReference type="GenomeRNAi" id="9421"/>
<dbReference type="Pharos" id="O96004">
    <property type="development level" value="Tbio"/>
</dbReference>
<dbReference type="PRO" id="PR:O96004"/>
<dbReference type="Proteomes" id="UP000005640">
    <property type="component" value="Chromosome 5"/>
</dbReference>
<dbReference type="RNAct" id="O96004">
    <property type="molecule type" value="protein"/>
</dbReference>
<dbReference type="Bgee" id="ENSG00000113196">
    <property type="expression patterns" value="Expressed in muscle layer of sigmoid colon and 54 other cell types or tissues"/>
</dbReference>
<dbReference type="GO" id="GO:0000785">
    <property type="term" value="C:chromatin"/>
    <property type="evidence" value="ECO:0000247"/>
    <property type="project" value="NTNU_SB"/>
</dbReference>
<dbReference type="GO" id="GO:0005737">
    <property type="term" value="C:cytoplasm"/>
    <property type="evidence" value="ECO:0000314"/>
    <property type="project" value="BHF-UCL"/>
</dbReference>
<dbReference type="GO" id="GO:0005730">
    <property type="term" value="C:nucleolus"/>
    <property type="evidence" value="ECO:0007669"/>
    <property type="project" value="UniProtKB-SubCell"/>
</dbReference>
<dbReference type="GO" id="GO:0005654">
    <property type="term" value="C:nucleoplasm"/>
    <property type="evidence" value="ECO:0007669"/>
    <property type="project" value="UniProtKB-SubCell"/>
</dbReference>
<dbReference type="GO" id="GO:0005634">
    <property type="term" value="C:nucleus"/>
    <property type="evidence" value="ECO:0000314"/>
    <property type="project" value="BHF-UCL"/>
</dbReference>
<dbReference type="GO" id="GO:0090575">
    <property type="term" value="C:RNA polymerase II transcription regulator complex"/>
    <property type="evidence" value="ECO:0000314"/>
    <property type="project" value="BHF-UCL"/>
</dbReference>
<dbReference type="GO" id="GO:0043425">
    <property type="term" value="F:bHLH transcription factor binding"/>
    <property type="evidence" value="ECO:0000353"/>
    <property type="project" value="BHF-UCL"/>
</dbReference>
<dbReference type="GO" id="GO:0001228">
    <property type="term" value="F:DNA-binding transcription activator activity, RNA polymerase II-specific"/>
    <property type="evidence" value="ECO:0000250"/>
    <property type="project" value="BHF-UCL"/>
</dbReference>
<dbReference type="GO" id="GO:0000981">
    <property type="term" value="F:DNA-binding transcription factor activity, RNA polymerase II-specific"/>
    <property type="evidence" value="ECO:0000314"/>
    <property type="project" value="BHF-UCL"/>
</dbReference>
<dbReference type="GO" id="GO:0001227">
    <property type="term" value="F:DNA-binding transcription repressor activity, RNA polymerase II-specific"/>
    <property type="evidence" value="ECO:0000314"/>
    <property type="project" value="NTNU_SB"/>
</dbReference>
<dbReference type="GO" id="GO:0019899">
    <property type="term" value="F:enzyme binding"/>
    <property type="evidence" value="ECO:0007669"/>
    <property type="project" value="Ensembl"/>
</dbReference>
<dbReference type="GO" id="GO:0042802">
    <property type="term" value="F:identical protein binding"/>
    <property type="evidence" value="ECO:0000250"/>
    <property type="project" value="BHF-UCL"/>
</dbReference>
<dbReference type="GO" id="GO:0042803">
    <property type="term" value="F:protein homodimerization activity"/>
    <property type="evidence" value="ECO:0007669"/>
    <property type="project" value="Ensembl"/>
</dbReference>
<dbReference type="GO" id="GO:0000978">
    <property type="term" value="F:RNA polymerase II cis-regulatory region sequence-specific DNA binding"/>
    <property type="evidence" value="ECO:0000314"/>
    <property type="project" value="NTNU_SB"/>
</dbReference>
<dbReference type="GO" id="GO:0000977">
    <property type="term" value="F:RNA polymerase II transcription regulatory region sequence-specific DNA binding"/>
    <property type="evidence" value="ECO:0000318"/>
    <property type="project" value="GO_Central"/>
</dbReference>
<dbReference type="GO" id="GO:0061629">
    <property type="term" value="F:RNA polymerase II-specific DNA-binding transcription factor binding"/>
    <property type="evidence" value="ECO:0000353"/>
    <property type="project" value="BHF-UCL"/>
</dbReference>
<dbReference type="GO" id="GO:0001221">
    <property type="term" value="F:transcription coregulator binding"/>
    <property type="evidence" value="ECO:0000250"/>
    <property type="project" value="BHF-UCL"/>
</dbReference>
<dbReference type="GO" id="GO:0001525">
    <property type="term" value="P:angiogenesis"/>
    <property type="evidence" value="ECO:0000250"/>
    <property type="project" value="BHF-UCL"/>
</dbReference>
<dbReference type="GO" id="GO:0001824">
    <property type="term" value="P:blastocyst development"/>
    <property type="evidence" value="ECO:0000270"/>
    <property type="project" value="BHF-UCL"/>
</dbReference>
<dbReference type="GO" id="GO:0003218">
    <property type="term" value="P:cardiac left ventricle formation"/>
    <property type="evidence" value="ECO:0000315"/>
    <property type="project" value="BHF-UCL"/>
</dbReference>
<dbReference type="GO" id="GO:0003219">
    <property type="term" value="P:cardiac right ventricle formation"/>
    <property type="evidence" value="ECO:0000315"/>
    <property type="project" value="BHF-UCL"/>
</dbReference>
<dbReference type="GO" id="GO:0060411">
    <property type="term" value="P:cardiac septum morphogenesis"/>
    <property type="evidence" value="ECO:0000315"/>
    <property type="project" value="BHF-UCL"/>
</dbReference>
<dbReference type="GO" id="GO:0060536">
    <property type="term" value="P:cartilage morphogenesis"/>
    <property type="evidence" value="ECO:0007669"/>
    <property type="project" value="Ensembl"/>
</dbReference>
<dbReference type="GO" id="GO:0035050">
    <property type="term" value="P:embryonic heart tube development"/>
    <property type="evidence" value="ECO:0000250"/>
    <property type="project" value="BHF-UCL"/>
</dbReference>
<dbReference type="GO" id="GO:0003144">
    <property type="term" value="P:embryonic heart tube formation"/>
    <property type="evidence" value="ECO:0007669"/>
    <property type="project" value="Ensembl"/>
</dbReference>
<dbReference type="GO" id="GO:0007507">
    <property type="term" value="P:heart development"/>
    <property type="evidence" value="ECO:0000250"/>
    <property type="project" value="BHF-UCL"/>
</dbReference>
<dbReference type="GO" id="GO:0001947">
    <property type="term" value="P:heart looping"/>
    <property type="evidence" value="ECO:0000250"/>
    <property type="project" value="BHF-UCL"/>
</dbReference>
<dbReference type="GO" id="GO:0060485">
    <property type="term" value="P:mesenchyme development"/>
    <property type="evidence" value="ECO:0007669"/>
    <property type="project" value="Ensembl"/>
</dbReference>
<dbReference type="GO" id="GO:0001707">
    <property type="term" value="P:mesoderm formation"/>
    <property type="evidence" value="ECO:0007669"/>
    <property type="project" value="Ensembl"/>
</dbReference>
<dbReference type="GO" id="GO:0000122">
    <property type="term" value="P:negative regulation of transcription by RNA polymerase II"/>
    <property type="evidence" value="ECO:0000314"/>
    <property type="project" value="BHF-UCL"/>
</dbReference>
<dbReference type="GO" id="GO:0042475">
    <property type="term" value="P:odontogenesis of dentin-containing tooth"/>
    <property type="evidence" value="ECO:0007669"/>
    <property type="project" value="Ensembl"/>
</dbReference>
<dbReference type="GO" id="GO:0045944">
    <property type="term" value="P:positive regulation of transcription by RNA polymerase II"/>
    <property type="evidence" value="ECO:0000314"/>
    <property type="project" value="BHF-UCL"/>
</dbReference>
<dbReference type="GO" id="GO:0006357">
    <property type="term" value="P:regulation of transcription by RNA polymerase II"/>
    <property type="evidence" value="ECO:0000318"/>
    <property type="project" value="GO_Central"/>
</dbReference>
<dbReference type="GO" id="GO:0001829">
    <property type="term" value="P:trophectodermal cell differentiation"/>
    <property type="evidence" value="ECO:0000270"/>
    <property type="project" value="BHF-UCL"/>
</dbReference>
<dbReference type="GO" id="GO:0060707">
    <property type="term" value="P:trophoblast giant cell differentiation"/>
    <property type="evidence" value="ECO:0000250"/>
    <property type="project" value="UniProtKB"/>
</dbReference>
<dbReference type="GO" id="GO:0055010">
    <property type="term" value="P:ventricular cardiac muscle tissue morphogenesis"/>
    <property type="evidence" value="ECO:0000315"/>
    <property type="project" value="BHF-UCL"/>
</dbReference>
<dbReference type="CDD" id="cd18952">
    <property type="entry name" value="bHLH_TS_HAND1"/>
    <property type="match status" value="1"/>
</dbReference>
<dbReference type="FunFam" id="4.10.280.10:FF:000010">
    <property type="entry name" value="Scleraxis bHLH transcription factor"/>
    <property type="match status" value="1"/>
</dbReference>
<dbReference type="Gene3D" id="4.10.280.10">
    <property type="entry name" value="Helix-loop-helix DNA-binding domain"/>
    <property type="match status" value="1"/>
</dbReference>
<dbReference type="InterPro" id="IPR011598">
    <property type="entry name" value="bHLH_dom"/>
</dbReference>
<dbReference type="InterPro" id="IPR050283">
    <property type="entry name" value="E-box_TF_Regulators"/>
</dbReference>
<dbReference type="InterPro" id="IPR036638">
    <property type="entry name" value="HLH_DNA-bd_sf"/>
</dbReference>
<dbReference type="PANTHER" id="PTHR23349">
    <property type="entry name" value="BASIC HELIX-LOOP-HELIX TRANSCRIPTION FACTOR, TWIST"/>
    <property type="match status" value="1"/>
</dbReference>
<dbReference type="PANTHER" id="PTHR23349:SF3">
    <property type="entry name" value="HEART- AND NEURAL CREST DERIVATIVES-EXPRESSED PROTEIN 1"/>
    <property type="match status" value="1"/>
</dbReference>
<dbReference type="Pfam" id="PF00010">
    <property type="entry name" value="HLH"/>
    <property type="match status" value="1"/>
</dbReference>
<dbReference type="SMART" id="SM00353">
    <property type="entry name" value="HLH"/>
    <property type="match status" value="1"/>
</dbReference>
<dbReference type="SUPFAM" id="SSF47459">
    <property type="entry name" value="HLH, helix-loop-helix DNA-binding domain"/>
    <property type="match status" value="1"/>
</dbReference>
<dbReference type="PROSITE" id="PS50888">
    <property type="entry name" value="BHLH"/>
    <property type="match status" value="1"/>
</dbReference>
<proteinExistence type="evidence at protein level"/>
<organism>
    <name type="scientific">Homo sapiens</name>
    <name type="common">Human</name>
    <dbReference type="NCBI Taxonomy" id="9606"/>
    <lineage>
        <taxon>Eukaryota</taxon>
        <taxon>Metazoa</taxon>
        <taxon>Chordata</taxon>
        <taxon>Craniata</taxon>
        <taxon>Vertebrata</taxon>
        <taxon>Euteleostomi</taxon>
        <taxon>Mammalia</taxon>
        <taxon>Eutheria</taxon>
        <taxon>Euarchontoglires</taxon>
        <taxon>Primates</taxon>
        <taxon>Haplorrhini</taxon>
        <taxon>Catarrhini</taxon>
        <taxon>Hominidae</taxon>
        <taxon>Homo</taxon>
    </lineage>
</organism>
<gene>
    <name type="primary">HAND1</name>
    <name type="synonym">BHLHA27</name>
    <name type="synonym">EHAND</name>
</gene>
<feature type="chain" id="PRO_0000127184" description="Heart- and neural crest derivatives-expressed protein 1">
    <location>
        <begin position="1"/>
        <end position="215"/>
    </location>
</feature>
<feature type="domain" description="bHLH" evidence="3">
    <location>
        <begin position="94"/>
        <end position="146"/>
    </location>
</feature>
<feature type="region of interest" description="Disordered" evidence="4">
    <location>
        <begin position="53"/>
        <end position="109"/>
    </location>
</feature>
<feature type="region of interest" description="Disordered" evidence="4">
    <location>
        <begin position="166"/>
        <end position="198"/>
    </location>
</feature>
<feature type="compositionally biased region" description="Low complexity" evidence="4">
    <location>
        <begin position="65"/>
        <end position="89"/>
    </location>
</feature>
<feature type="compositionally biased region" description="Basic residues" evidence="4">
    <location>
        <begin position="92"/>
        <end position="104"/>
    </location>
</feature>
<feature type="modified residue" description="Phosphothreonine; by PLK4" evidence="2">
    <location>
        <position position="107"/>
    </location>
</feature>
<feature type="modified residue" description="Phosphoserine; by PLK4" evidence="2">
    <location>
        <position position="109"/>
    </location>
</feature>
<keyword id="KW-0010">Activator</keyword>
<keyword id="KW-0217">Developmental protein</keyword>
<keyword id="KW-0238">DNA-binding</keyword>
<keyword id="KW-0539">Nucleus</keyword>
<keyword id="KW-0597">Phosphoprotein</keyword>
<keyword id="KW-1267">Proteomics identification</keyword>
<keyword id="KW-1185">Reference proteome</keyword>
<keyword id="KW-0804">Transcription</keyword>
<keyword id="KW-0805">Transcription regulation</keyword>
<evidence type="ECO:0000250" key="1"/>
<evidence type="ECO:0000250" key="2">
    <source>
        <dbReference type="UniProtKB" id="Q64279"/>
    </source>
</evidence>
<evidence type="ECO:0000255" key="3">
    <source>
        <dbReference type="PROSITE-ProRule" id="PRU00981"/>
    </source>
</evidence>
<evidence type="ECO:0000256" key="4">
    <source>
        <dbReference type="SAM" id="MobiDB-lite"/>
    </source>
</evidence>
<evidence type="ECO:0000269" key="5">
    <source>
    </source>
</evidence>